<keyword id="KW-0007">Acetylation</keyword>
<keyword id="KW-0067">ATP-binding</keyword>
<keyword id="KW-0963">Cytoplasm</keyword>
<keyword id="KW-0547">Nucleotide-binding</keyword>
<keyword id="KW-0539">Nucleus</keyword>
<keyword id="KW-0597">Phosphoprotein</keyword>
<keyword id="KW-0647">Proteasome</keyword>
<keyword id="KW-1185">Reference proteome</keyword>
<sequence>MADPRDKALQDYRKKLLEHKEIDGRLKELREQLKELTKQYEKSENDLKALQSVGQIVGEVLKQLTEEKFIVKATNGPRYVVGCRRQLDKSKLKPGTRVALDMTTLTIMRYLPREVDPLVYNMSHEDPGNVSYSEIGGLSEQIRELREVIELPLTNPELFQRVGIIPPKGCLLYGPPGTGKTLLARAVASQLDCNFLKVVSSSIVDKYIGESARLIREMFNYARDHQPCIIFMDEIDAIGGRRFSEGTSADREIQRTLMELLNQMDGFDTLHRVKMIMATNRPDTLDPALLRPGRLDRKIHIDLPNEQARLDILKIHAGPITKHGEIDYEAIVKLSDGFNGADLRNVCTEAGMFAIRADHDFVVQEDFMKAVRKVADSKKLESKLDYKPV</sequence>
<accession>P62335</accession>
<accession>P49719</accession>
<accession>Q92524</accession>
<feature type="chain" id="PRO_0000084734" description="26S proteasome regulatory subunit 10B">
    <location>
        <begin position="1"/>
        <end position="389"/>
    </location>
</feature>
<feature type="binding site" evidence="3">
    <location>
        <begin position="174"/>
        <end position="181"/>
    </location>
    <ligand>
        <name>ATP</name>
        <dbReference type="ChEBI" id="CHEBI:30616"/>
    </ligand>
</feature>
<feature type="modified residue" description="N6-acetyllysine" evidence="2">
    <location>
        <position position="72"/>
    </location>
</feature>
<feature type="modified residue" description="N6-acetyllysine" evidence="2">
    <location>
        <position position="206"/>
    </location>
</feature>
<feature type="modified residue" description="Phosphoserine" evidence="2">
    <location>
        <position position="244"/>
    </location>
</feature>
<gene>
    <name type="primary">PSMC6</name>
    <name type="synonym">SUG2</name>
</gene>
<protein>
    <recommendedName>
        <fullName>26S proteasome regulatory subunit 10B</fullName>
    </recommendedName>
    <alternativeName>
        <fullName>26S proteasome AAA-ATPase subunit RPT4</fullName>
    </alternativeName>
    <alternativeName>
        <fullName>Conserved ATPase domain protein 44</fullName>
        <shortName>CADp44</shortName>
    </alternativeName>
    <alternativeName>
        <fullName>Proteasome 26S subunit ATPase 6</fullName>
    </alternativeName>
    <alternativeName>
        <fullName>Proteasome subunit p42</fullName>
    </alternativeName>
</protein>
<evidence type="ECO:0000250" key="1"/>
<evidence type="ECO:0000250" key="2">
    <source>
        <dbReference type="UniProtKB" id="P62333"/>
    </source>
</evidence>
<evidence type="ECO:0000255" key="3"/>
<evidence type="ECO:0000305" key="4"/>
<dbReference type="EMBL" id="U36395">
    <property type="protein sequence ID" value="AAB40354.1"/>
    <property type="molecule type" value="mRNA"/>
</dbReference>
<dbReference type="PIR" id="JC5349">
    <property type="entry name" value="JC5349"/>
</dbReference>
<dbReference type="RefSeq" id="NP_001269189.1">
    <property type="nucleotide sequence ID" value="NM_001282260.1"/>
</dbReference>
<dbReference type="SMR" id="P62335"/>
<dbReference type="FunCoup" id="P62335">
    <property type="interactions" value="3137"/>
</dbReference>
<dbReference type="STRING" id="43179.ENSSTOP00000012983"/>
<dbReference type="Ensembl" id="ENSSTOT00000014492.3">
    <property type="protein sequence ID" value="ENSSTOP00000012983.2"/>
    <property type="gene ID" value="ENSSTOG00000014494.3"/>
</dbReference>
<dbReference type="GeneID" id="101969826"/>
<dbReference type="KEGG" id="iti:101969826"/>
<dbReference type="CTD" id="5706"/>
<dbReference type="eggNOG" id="KOG0651">
    <property type="taxonomic scope" value="Eukaryota"/>
</dbReference>
<dbReference type="GeneTree" id="ENSGT01020000230346"/>
<dbReference type="HOGENOM" id="CLU_000688_2_2_1"/>
<dbReference type="InParanoid" id="P62335"/>
<dbReference type="OMA" id="DHEPCVI"/>
<dbReference type="OrthoDB" id="1937997at2759"/>
<dbReference type="TreeFam" id="TF106229"/>
<dbReference type="Proteomes" id="UP000005215">
    <property type="component" value="Unassembled WGS sequence"/>
</dbReference>
<dbReference type="GO" id="GO:0005737">
    <property type="term" value="C:cytoplasm"/>
    <property type="evidence" value="ECO:0007669"/>
    <property type="project" value="UniProtKB-SubCell"/>
</dbReference>
<dbReference type="GO" id="GO:0005634">
    <property type="term" value="C:nucleus"/>
    <property type="evidence" value="ECO:0007669"/>
    <property type="project" value="UniProtKB-SubCell"/>
</dbReference>
<dbReference type="GO" id="GO:0022624">
    <property type="term" value="C:proteasome accessory complex"/>
    <property type="evidence" value="ECO:0000250"/>
    <property type="project" value="UniProtKB"/>
</dbReference>
<dbReference type="GO" id="GO:0005524">
    <property type="term" value="F:ATP binding"/>
    <property type="evidence" value="ECO:0007669"/>
    <property type="project" value="UniProtKB-KW"/>
</dbReference>
<dbReference type="GO" id="GO:0016887">
    <property type="term" value="F:ATP hydrolysis activity"/>
    <property type="evidence" value="ECO:0007669"/>
    <property type="project" value="InterPro"/>
</dbReference>
<dbReference type="GO" id="GO:0042802">
    <property type="term" value="F:identical protein binding"/>
    <property type="evidence" value="ECO:0007669"/>
    <property type="project" value="Ensembl"/>
</dbReference>
<dbReference type="CDD" id="cd19502">
    <property type="entry name" value="RecA-like_PAN_like"/>
    <property type="match status" value="1"/>
</dbReference>
<dbReference type="FunFam" id="1.10.8.60:FF:000008">
    <property type="entry name" value="26S protease regulatory subunit 10B"/>
    <property type="match status" value="1"/>
</dbReference>
<dbReference type="FunFam" id="2.40.50.140:FF:000027">
    <property type="entry name" value="26S protease regulatory subunit 10B"/>
    <property type="match status" value="1"/>
</dbReference>
<dbReference type="FunFam" id="3.40.50.300:FF:000034">
    <property type="entry name" value="26S protease regulatory subunit 10B"/>
    <property type="match status" value="1"/>
</dbReference>
<dbReference type="Gene3D" id="1.10.8.60">
    <property type="match status" value="1"/>
</dbReference>
<dbReference type="Gene3D" id="2.40.50.140">
    <property type="entry name" value="Nucleic acid-binding proteins"/>
    <property type="match status" value="1"/>
</dbReference>
<dbReference type="Gene3D" id="3.40.50.300">
    <property type="entry name" value="P-loop containing nucleotide triphosphate hydrolases"/>
    <property type="match status" value="1"/>
</dbReference>
<dbReference type="InterPro" id="IPR050221">
    <property type="entry name" value="26S_Proteasome_ATPase"/>
</dbReference>
<dbReference type="InterPro" id="IPR003593">
    <property type="entry name" value="AAA+_ATPase"/>
</dbReference>
<dbReference type="InterPro" id="IPR041569">
    <property type="entry name" value="AAA_lid_3"/>
</dbReference>
<dbReference type="InterPro" id="IPR003959">
    <property type="entry name" value="ATPase_AAA_core"/>
</dbReference>
<dbReference type="InterPro" id="IPR003960">
    <property type="entry name" value="ATPase_AAA_CS"/>
</dbReference>
<dbReference type="InterPro" id="IPR012340">
    <property type="entry name" value="NA-bd_OB-fold"/>
</dbReference>
<dbReference type="InterPro" id="IPR027417">
    <property type="entry name" value="P-loop_NTPase"/>
</dbReference>
<dbReference type="InterPro" id="IPR032501">
    <property type="entry name" value="Prot_ATP_ID_OB_2nd"/>
</dbReference>
<dbReference type="PANTHER" id="PTHR23073">
    <property type="entry name" value="26S PROTEASOME REGULATORY SUBUNIT"/>
    <property type="match status" value="1"/>
</dbReference>
<dbReference type="Pfam" id="PF00004">
    <property type="entry name" value="AAA"/>
    <property type="match status" value="1"/>
</dbReference>
<dbReference type="Pfam" id="PF17862">
    <property type="entry name" value="AAA_lid_3"/>
    <property type="match status" value="1"/>
</dbReference>
<dbReference type="Pfam" id="PF16450">
    <property type="entry name" value="Prot_ATP_ID_OB_C"/>
    <property type="match status" value="1"/>
</dbReference>
<dbReference type="SMART" id="SM00382">
    <property type="entry name" value="AAA"/>
    <property type="match status" value="1"/>
</dbReference>
<dbReference type="SUPFAM" id="SSF52540">
    <property type="entry name" value="P-loop containing nucleoside triphosphate hydrolases"/>
    <property type="match status" value="1"/>
</dbReference>
<dbReference type="PROSITE" id="PS00674">
    <property type="entry name" value="AAA"/>
    <property type="match status" value="1"/>
</dbReference>
<reference key="1">
    <citation type="journal article" date="1996" name="Gene">
        <title>CADp44: a novel regulatory subunit of the 26S proteasome and the mammalian homolog of yeast Sug2p.</title>
        <authorList>
            <person name="Bauer V.W."/>
            <person name="Swaffield J.C."/>
            <person name="Johnston S.A."/>
            <person name="Andrews M.T."/>
        </authorList>
    </citation>
    <scope>NUCLEOTIDE SEQUENCE [MRNA]</scope>
</reference>
<proteinExistence type="evidence at transcript level"/>
<organism>
    <name type="scientific">Ictidomys tridecemlineatus</name>
    <name type="common">Thirteen-lined ground squirrel</name>
    <name type="synonym">Spermophilus tridecemlineatus</name>
    <dbReference type="NCBI Taxonomy" id="43179"/>
    <lineage>
        <taxon>Eukaryota</taxon>
        <taxon>Metazoa</taxon>
        <taxon>Chordata</taxon>
        <taxon>Craniata</taxon>
        <taxon>Vertebrata</taxon>
        <taxon>Euteleostomi</taxon>
        <taxon>Mammalia</taxon>
        <taxon>Eutheria</taxon>
        <taxon>Euarchontoglires</taxon>
        <taxon>Glires</taxon>
        <taxon>Rodentia</taxon>
        <taxon>Sciuromorpha</taxon>
        <taxon>Sciuridae</taxon>
        <taxon>Xerinae</taxon>
        <taxon>Marmotini</taxon>
        <taxon>Ictidomys</taxon>
    </lineage>
</organism>
<comment type="function">
    <text>The 26S proteasome is involved in the ATP-dependent degradation of ubiquitinated proteins. The regulatory (or ATPase) complex confers ATP dependency and substrate specificity to the 26S complex.</text>
</comment>
<comment type="subunit">
    <text evidence="1">Found in the multi-protein complexes: the 26S proteasome (formed from the 20S proteasome and PA700), and the modulator. PA700 consists of 28 subunits arranged to form a cylinder-shaped complex by four stacked rings, each containing seven subunits. Interacts with PAAF1 (By similarity).</text>
</comment>
<comment type="subcellular location">
    <subcellularLocation>
        <location evidence="1">Cytoplasm</location>
    </subcellularLocation>
    <subcellularLocation>
        <location evidence="1">Nucleus</location>
    </subcellularLocation>
</comment>
<comment type="similarity">
    <text evidence="4">Belongs to the AAA ATPase family.</text>
</comment>
<name>PRS10_ICTTR</name>